<feature type="signal peptide" evidence="2">
    <location>
        <begin position="1"/>
        <end position="17"/>
    </location>
</feature>
<feature type="chain" id="PRO_5000220226" description="Probable 1,4-beta-D-glucan cellobiohydrolase A">
    <location>
        <begin position="18"/>
        <end position="452"/>
    </location>
</feature>
<feature type="active site" description="Nucleophile" evidence="1">
    <location>
        <position position="227"/>
    </location>
</feature>
<feature type="active site" description="Proton donor" evidence="1">
    <location>
        <position position="232"/>
    </location>
</feature>
<feature type="glycosylation site" description="N-linked (GlcNAc...) asparagine" evidence="2">
    <location>
        <position position="62"/>
    </location>
</feature>
<feature type="glycosylation site" description="N-linked (GlcNAc...) asparagine" evidence="2">
    <location>
        <position position="285"/>
    </location>
</feature>
<feature type="glycosylation site" description="N-linked (GlcNAc...) asparagine" evidence="2">
    <location>
        <position position="335"/>
    </location>
</feature>
<feature type="glycosylation site" description="N-linked (GlcNAc...) asparagine" evidence="2">
    <location>
        <position position="402"/>
    </location>
</feature>
<feature type="glycosylation site" description="N-linked (GlcNAc...) asparagine" evidence="2">
    <location>
        <position position="445"/>
    </location>
</feature>
<dbReference type="EC" id="3.2.1.91"/>
<dbReference type="EMBL" id="AM270149">
    <property type="protein sequence ID" value="CAK39699.1"/>
    <property type="molecule type" value="Genomic_DNA"/>
</dbReference>
<dbReference type="RefSeq" id="XP_001392008.2">
    <property type="nucleotide sequence ID" value="XM_001391971.2"/>
</dbReference>
<dbReference type="SMR" id="A2QPG2"/>
<dbReference type="GlyCosmos" id="A2QPG2">
    <property type="glycosylation" value="5 sites, No reported glycans"/>
</dbReference>
<dbReference type="EnsemblFungi" id="CAK39699">
    <property type="protein sequence ID" value="CAK39699"/>
    <property type="gene ID" value="An07g09330"/>
</dbReference>
<dbReference type="GeneID" id="4982202"/>
<dbReference type="KEGG" id="ang:An07g09330"/>
<dbReference type="VEuPathDB" id="FungiDB:An07g09330"/>
<dbReference type="HOGENOM" id="CLU_020817_3_1_1"/>
<dbReference type="Proteomes" id="UP000006706">
    <property type="component" value="Chromosome 4L"/>
</dbReference>
<dbReference type="GO" id="GO:0005576">
    <property type="term" value="C:extracellular region"/>
    <property type="evidence" value="ECO:0007669"/>
    <property type="project" value="UniProtKB-SubCell"/>
</dbReference>
<dbReference type="GO" id="GO:0016162">
    <property type="term" value="F:cellulose 1,4-beta-cellobiosidase activity"/>
    <property type="evidence" value="ECO:0007669"/>
    <property type="project" value="UniProtKB-EC"/>
</dbReference>
<dbReference type="GO" id="GO:0030245">
    <property type="term" value="P:cellulose catabolic process"/>
    <property type="evidence" value="ECO:0007669"/>
    <property type="project" value="UniProtKB-KW"/>
</dbReference>
<dbReference type="CDD" id="cd07999">
    <property type="entry name" value="GH7_CBH_EG"/>
    <property type="match status" value="1"/>
</dbReference>
<dbReference type="FunFam" id="2.70.100.10:FF:000001">
    <property type="entry name" value="Glucanase"/>
    <property type="match status" value="1"/>
</dbReference>
<dbReference type="Gene3D" id="2.70.100.10">
    <property type="entry name" value="Glycoside hydrolase, family 7, domain"/>
    <property type="match status" value="1"/>
</dbReference>
<dbReference type="InterPro" id="IPR013320">
    <property type="entry name" value="ConA-like_dom_sf"/>
</dbReference>
<dbReference type="InterPro" id="IPR001722">
    <property type="entry name" value="Glyco_hydro_7"/>
</dbReference>
<dbReference type="InterPro" id="IPR037019">
    <property type="entry name" value="Glyco_hydro_7_sf"/>
</dbReference>
<dbReference type="PANTHER" id="PTHR33753:SF6">
    <property type="entry name" value="1,4-BETA-D-GLUCAN CELLOBIOHYDROLASE A-RELATED"/>
    <property type="match status" value="1"/>
</dbReference>
<dbReference type="PANTHER" id="PTHR33753">
    <property type="entry name" value="1,4-BETA-D-GLUCAN CELLOBIOHYDROLASE B"/>
    <property type="match status" value="1"/>
</dbReference>
<dbReference type="Pfam" id="PF00840">
    <property type="entry name" value="Glyco_hydro_7"/>
    <property type="match status" value="1"/>
</dbReference>
<dbReference type="PRINTS" id="PR00734">
    <property type="entry name" value="GLHYDRLASE7"/>
</dbReference>
<dbReference type="SUPFAM" id="SSF49899">
    <property type="entry name" value="Concanavalin A-like lectins/glucanases"/>
    <property type="match status" value="1"/>
</dbReference>
<gene>
    <name type="primary">cbhA</name>
    <name type="synonym">celD</name>
    <name type="ORF">An07g09330</name>
</gene>
<sequence>MHQRALLFSALLTAVRAQQAGTLTEEVHPSLTWQKCTSEGSCTEQSGSVVIDSNWRWTHSVNDSTNCYTGNTWDATLCPDDETCATNCALDGADYESTYGVTTDGDSLTLKFVTGSNVGSRLYLMDTSDEGYQTFNLLDAEFTFDVDVSNLPCGLNGALYFTAMDADGGASKYPANKAGAKYGTGYCDSQCPRDLKFIDGQANVDGWEPSSNNDNTGIGNHGSCCPEMDIWEANKISTALTPHPCDSSEQTMCEGNDCGGTYSDDRYGGTCDPDGCDFNPYRMGNDSFYGPGKTIDTGSKMTVVTQFITDGSGSLSEIKRYYVQNGNVIANADSNISGVTGNSITTDFCTAQKKAFGDDDIFAEHNGLAGISDAMSSMVLILSLWDDYYASMEWLDSDYPENATATDPGVARGTCDSESGVPATVEGAHPDSSVTFSNIKFGPINSTFSASA</sequence>
<name>CBHA_ASPNC</name>
<comment type="function">
    <text evidence="1">The biological conversion of cellulose to glucose generally requires three types of hydrolytic enzymes: (1) Endoglucanases which cut internal beta-1,4-glucosidic bonds; (2) Exocellobiohydrolases that cut the disaccharide cellobiose from the non-reducing end of the cellulose polymer chain; (3) Beta-1,4-glucosidases which hydrolyze the cellobiose and other short cello-oligosaccharides to glucose.</text>
</comment>
<comment type="catalytic activity">
    <reaction>
        <text>Hydrolysis of (1-&gt;4)-beta-D-glucosidic linkages in cellulose and cellotetraose, releasing cellobiose from the non-reducing ends of the chains.</text>
        <dbReference type="EC" id="3.2.1.91"/>
    </reaction>
</comment>
<comment type="subcellular location">
    <subcellularLocation>
        <location evidence="3">Secreted</location>
    </subcellularLocation>
</comment>
<comment type="similarity">
    <text evidence="3">Belongs to the glycosyl hydrolase 7 (cellulase C) family.</text>
</comment>
<organism>
    <name type="scientific">Aspergillus niger (strain ATCC MYA-4892 / CBS 513.88 / FGSC A1513)</name>
    <dbReference type="NCBI Taxonomy" id="425011"/>
    <lineage>
        <taxon>Eukaryota</taxon>
        <taxon>Fungi</taxon>
        <taxon>Dikarya</taxon>
        <taxon>Ascomycota</taxon>
        <taxon>Pezizomycotina</taxon>
        <taxon>Eurotiomycetes</taxon>
        <taxon>Eurotiomycetidae</taxon>
        <taxon>Eurotiales</taxon>
        <taxon>Aspergillaceae</taxon>
        <taxon>Aspergillus</taxon>
        <taxon>Aspergillus subgen. Circumdati</taxon>
    </lineage>
</organism>
<proteinExistence type="inferred from homology"/>
<accession>A2QPG2</accession>
<reference key="1">
    <citation type="journal article" date="2007" name="Nat. Biotechnol.">
        <title>Genome sequencing and analysis of the versatile cell factory Aspergillus niger CBS 513.88.</title>
        <authorList>
            <person name="Pel H.J."/>
            <person name="de Winde J.H."/>
            <person name="Archer D.B."/>
            <person name="Dyer P.S."/>
            <person name="Hofmann G."/>
            <person name="Schaap P.J."/>
            <person name="Turner G."/>
            <person name="de Vries R.P."/>
            <person name="Albang R."/>
            <person name="Albermann K."/>
            <person name="Andersen M.R."/>
            <person name="Bendtsen J.D."/>
            <person name="Benen J.A.E."/>
            <person name="van den Berg M."/>
            <person name="Breestraat S."/>
            <person name="Caddick M.X."/>
            <person name="Contreras R."/>
            <person name="Cornell M."/>
            <person name="Coutinho P.M."/>
            <person name="Danchin E.G.J."/>
            <person name="Debets A.J.M."/>
            <person name="Dekker P."/>
            <person name="van Dijck P.W.M."/>
            <person name="van Dijk A."/>
            <person name="Dijkhuizen L."/>
            <person name="Driessen A.J.M."/>
            <person name="d'Enfert C."/>
            <person name="Geysens S."/>
            <person name="Goosen C."/>
            <person name="Groot G.S.P."/>
            <person name="de Groot P.W.J."/>
            <person name="Guillemette T."/>
            <person name="Henrissat B."/>
            <person name="Herweijer M."/>
            <person name="van den Hombergh J.P.T.W."/>
            <person name="van den Hondel C.A.M.J.J."/>
            <person name="van der Heijden R.T.J.M."/>
            <person name="van der Kaaij R.M."/>
            <person name="Klis F.M."/>
            <person name="Kools H.J."/>
            <person name="Kubicek C.P."/>
            <person name="van Kuyk P.A."/>
            <person name="Lauber J."/>
            <person name="Lu X."/>
            <person name="van der Maarel M.J.E.C."/>
            <person name="Meulenberg R."/>
            <person name="Menke H."/>
            <person name="Mortimer M.A."/>
            <person name="Nielsen J."/>
            <person name="Oliver S.G."/>
            <person name="Olsthoorn M."/>
            <person name="Pal K."/>
            <person name="van Peij N.N.M.E."/>
            <person name="Ram A.F.J."/>
            <person name="Rinas U."/>
            <person name="Roubos J.A."/>
            <person name="Sagt C.M.J."/>
            <person name="Schmoll M."/>
            <person name="Sun J."/>
            <person name="Ussery D."/>
            <person name="Varga J."/>
            <person name="Vervecken W."/>
            <person name="van de Vondervoort P.J.J."/>
            <person name="Wedler H."/>
            <person name="Woesten H.A.B."/>
            <person name="Zeng A.-P."/>
            <person name="van Ooyen A.J.J."/>
            <person name="Visser J."/>
            <person name="Stam H."/>
        </authorList>
    </citation>
    <scope>NUCLEOTIDE SEQUENCE [LARGE SCALE GENOMIC DNA]</scope>
    <source>
        <strain>ATCC MYA-4892 / CBS 513.88 / FGSC A1513</strain>
    </source>
</reference>
<keyword id="KW-0119">Carbohydrate metabolism</keyword>
<keyword id="KW-0136">Cellulose degradation</keyword>
<keyword id="KW-0325">Glycoprotein</keyword>
<keyword id="KW-0326">Glycosidase</keyword>
<keyword id="KW-0378">Hydrolase</keyword>
<keyword id="KW-0624">Polysaccharide degradation</keyword>
<keyword id="KW-1185">Reference proteome</keyword>
<keyword id="KW-0964">Secreted</keyword>
<keyword id="KW-0732">Signal</keyword>
<protein>
    <recommendedName>
        <fullName>Probable 1,4-beta-D-glucan cellobiohydrolase A</fullName>
        <ecNumber>3.2.1.91</ecNumber>
    </recommendedName>
    <alternativeName>
        <fullName>Beta-glucancellobiohydrolase A</fullName>
    </alternativeName>
    <alternativeName>
        <fullName>Cellobiohydrolase D</fullName>
    </alternativeName>
    <alternativeName>
        <fullName>Exocellobiohydrolase A</fullName>
    </alternativeName>
    <alternativeName>
        <fullName>Exoglucanase A</fullName>
    </alternativeName>
</protein>
<evidence type="ECO:0000250" key="1"/>
<evidence type="ECO:0000255" key="2"/>
<evidence type="ECO:0000305" key="3"/>